<evidence type="ECO:0000255" key="1">
    <source>
        <dbReference type="HAMAP-Rule" id="MF_01976"/>
    </source>
</evidence>
<evidence type="ECO:0000269" key="2">
    <source>
    </source>
</evidence>
<evidence type="ECO:0000303" key="3">
    <source>
    </source>
</evidence>
<evidence type="ECO:0000305" key="4"/>
<evidence type="ECO:0000305" key="5">
    <source>
    </source>
</evidence>
<protein>
    <recommendedName>
        <fullName evidence="1">ATP-dependent 6-phosphofructokinase</fullName>
        <shortName evidence="1">ATP-PFK</shortName>
        <shortName evidence="1">Phosphofructokinase</shortName>
        <ecNumber evidence="1 2">2.7.1.11</ecNumber>
    </recommendedName>
    <alternativeName>
        <fullName evidence="3">Phosphofructokinase A</fullName>
    </alternativeName>
    <alternativeName>
        <fullName evidence="1">Phosphohexokinase</fullName>
    </alternativeName>
    <alternativeName>
        <fullName evidence="4">Tagatose-6-phosphate kinase</fullName>
        <ecNumber evidence="2">2.7.1.144</ecNumber>
    </alternativeName>
</protein>
<comment type="function">
    <text evidence="2">Catalyzes the phosphorylation of D-fructose 6-phosphate to fructose 1,6-bisphosphate by ATP, the first committing step of glycolysis (PubMed:33540748). Can also catalyze the phosphorylation of tagatose-6-phosphate. Both sugar phosphates can function equivalently as substrates (PubMed:33540748). Cannot catalyze the reverse gluconeogenic reaction (PubMed:33540748).</text>
</comment>
<comment type="catalytic activity">
    <reaction evidence="1 2">
        <text>beta-D-fructose 6-phosphate + ATP = beta-D-fructose 1,6-bisphosphate + ADP + H(+)</text>
        <dbReference type="Rhea" id="RHEA:16109"/>
        <dbReference type="ChEBI" id="CHEBI:15378"/>
        <dbReference type="ChEBI" id="CHEBI:30616"/>
        <dbReference type="ChEBI" id="CHEBI:32966"/>
        <dbReference type="ChEBI" id="CHEBI:57634"/>
        <dbReference type="ChEBI" id="CHEBI:456216"/>
        <dbReference type="EC" id="2.7.1.11"/>
    </reaction>
    <physiologicalReaction direction="left-to-right" evidence="2">
        <dbReference type="Rhea" id="RHEA:16110"/>
    </physiologicalReaction>
</comment>
<comment type="catalytic activity">
    <reaction evidence="2">
        <text>D-tagatofuranose 6-phosphate + ATP = D-tagatofuranose 1,6-bisphosphate + ADP + H(+)</text>
        <dbReference type="Rhea" id="RHEA:12420"/>
        <dbReference type="ChEBI" id="CHEBI:15378"/>
        <dbReference type="ChEBI" id="CHEBI:30616"/>
        <dbReference type="ChEBI" id="CHEBI:58694"/>
        <dbReference type="ChEBI" id="CHEBI:58695"/>
        <dbReference type="ChEBI" id="CHEBI:456216"/>
        <dbReference type="EC" id="2.7.1.144"/>
    </reaction>
</comment>
<comment type="cofactor">
    <cofactor evidence="1 2">
        <name>Mg(2+)</name>
        <dbReference type="ChEBI" id="CHEBI:18420"/>
    </cofactor>
    <text evidence="2">Magnesium may play a role in formation and maintaining of proper enzyme conformation and multimerization.</text>
</comment>
<comment type="activity regulation">
    <text evidence="2">Inhibited by high concentrations of the substrates fructose 6-phosphate and ATP, and by the reaction products, fructose 1,6-bisphosphate and ADP. Allosterically inhibited by phosphoenolpyruvate (PEP), guanosine diphosphate (GDP) and citrate.</text>
</comment>
<comment type="biophysicochemical properties">
    <kinetics>
        <KM evidence="2">0.4 mM for fructose 6-phosphate</KM>
        <KM evidence="2">1 mM for ATP</KM>
        <KM evidence="2">0.43 mM for tagatose-6-phosphate</KM>
        <Vmax evidence="2">20.0 umol/min/mg enzyme with fructose 6-phosphate as substrate</Vmax>
        <Vmax evidence="2">19.0 umol/min/mg enzyme with ATP as substrate</Vmax>
        <Vmax evidence="2">30.0 umol/min/mg enzyme with tagatose-6-phosphate as substrate</Vmax>
    </kinetics>
</comment>
<comment type="pathway">
    <text evidence="1 5">Carbohydrate degradation; glycolysis; D-glyceraldehyde 3-phosphate and glycerone phosphate from D-glucose: step 3/4.</text>
</comment>
<comment type="subunit">
    <text evidence="1">Homodimer or homotetramer.</text>
</comment>
<comment type="subcellular location">
    <subcellularLocation>
        <location evidence="1">Cytoplasm</location>
    </subcellularLocation>
</comment>
<comment type="miscellaneous">
    <text evidence="2">Activity of PfkA is tenfold higher than that of PfkB (PubMed:33540748). Activity with tagatose-6-phosphate suggests that PfkA and/or PfkB may substitute for tagatose-6-phosphate kinase and further support glycolysis (PubMed:33540748).</text>
</comment>
<comment type="similarity">
    <text evidence="1">Belongs to the phosphofructokinase type A (PFKA) family. Mixed-substrate PFK group III subfamily.</text>
</comment>
<accession>P9WID7</accession>
<accession>L0TBI5</accession>
<accession>O53257</accession>
<accession>P65690</accession>
<gene>
    <name evidence="1 3" type="primary">pfkA</name>
    <name type="ordered locus">Rv3010c</name>
    <name type="ORF">MTV012.24c</name>
</gene>
<name>PFKA_MYCTU</name>
<proteinExistence type="evidence at protein level"/>
<organism>
    <name type="scientific">Mycobacterium tuberculosis (strain ATCC 25618 / H37Rv)</name>
    <dbReference type="NCBI Taxonomy" id="83332"/>
    <lineage>
        <taxon>Bacteria</taxon>
        <taxon>Bacillati</taxon>
        <taxon>Actinomycetota</taxon>
        <taxon>Actinomycetes</taxon>
        <taxon>Mycobacteriales</taxon>
        <taxon>Mycobacteriaceae</taxon>
        <taxon>Mycobacterium</taxon>
        <taxon>Mycobacterium tuberculosis complex</taxon>
    </lineage>
</organism>
<reference key="1">
    <citation type="journal article" date="1998" name="Nature">
        <title>Deciphering the biology of Mycobacterium tuberculosis from the complete genome sequence.</title>
        <authorList>
            <person name="Cole S.T."/>
            <person name="Brosch R."/>
            <person name="Parkhill J."/>
            <person name="Garnier T."/>
            <person name="Churcher C.M."/>
            <person name="Harris D.E."/>
            <person name="Gordon S.V."/>
            <person name="Eiglmeier K."/>
            <person name="Gas S."/>
            <person name="Barry C.E. III"/>
            <person name="Tekaia F."/>
            <person name="Badcock K."/>
            <person name="Basham D."/>
            <person name="Brown D."/>
            <person name="Chillingworth T."/>
            <person name="Connor R."/>
            <person name="Davies R.M."/>
            <person name="Devlin K."/>
            <person name="Feltwell T."/>
            <person name="Gentles S."/>
            <person name="Hamlin N."/>
            <person name="Holroyd S."/>
            <person name="Hornsby T."/>
            <person name="Jagels K."/>
            <person name="Krogh A."/>
            <person name="McLean J."/>
            <person name="Moule S."/>
            <person name="Murphy L.D."/>
            <person name="Oliver S."/>
            <person name="Osborne J."/>
            <person name="Quail M.A."/>
            <person name="Rajandream M.A."/>
            <person name="Rogers J."/>
            <person name="Rutter S."/>
            <person name="Seeger K."/>
            <person name="Skelton S."/>
            <person name="Squares S."/>
            <person name="Squares R."/>
            <person name="Sulston J.E."/>
            <person name="Taylor K."/>
            <person name="Whitehead S."/>
            <person name="Barrell B.G."/>
        </authorList>
    </citation>
    <scope>NUCLEOTIDE SEQUENCE [LARGE SCALE GENOMIC DNA]</scope>
    <source>
        <strain>ATCC 25618 / H37Rv</strain>
    </source>
</reference>
<reference key="2">
    <citation type="journal article" date="2011" name="Mol. Cell. Proteomics">
        <title>Proteogenomic analysis of Mycobacterium tuberculosis by high resolution mass spectrometry.</title>
        <authorList>
            <person name="Kelkar D.S."/>
            <person name="Kumar D."/>
            <person name="Kumar P."/>
            <person name="Balakrishnan L."/>
            <person name="Muthusamy B."/>
            <person name="Yadav A.K."/>
            <person name="Shrivastava P."/>
            <person name="Marimuthu A."/>
            <person name="Anand S."/>
            <person name="Sundaram H."/>
            <person name="Kingsbury R."/>
            <person name="Harsha H.C."/>
            <person name="Nair B."/>
            <person name="Prasad T.S."/>
            <person name="Chauhan D.S."/>
            <person name="Katoch K."/>
            <person name="Katoch V.M."/>
            <person name="Kumar P."/>
            <person name="Chaerkady R."/>
            <person name="Ramachandran S."/>
            <person name="Dash D."/>
            <person name="Pandey A."/>
        </authorList>
    </citation>
    <scope>IDENTIFICATION BY MASS SPECTROMETRY [LARGE SCALE ANALYSIS]</scope>
    <source>
        <strain>ATCC 25618 / H37Rv</strain>
    </source>
</reference>
<reference key="3">
    <citation type="journal article" date="2021" name="Int. J. Mol. Sci.">
        <title>Phosphofructokinases A and B from Mycobacterium tuberculosis display different catalytic properties and allosteric regulation.</title>
        <authorList>
            <person name="Snasel J."/>
            <person name="Machova I."/>
            <person name="Solinova V."/>
            <person name="Kasicka V."/>
            <person name="Krecmerova M."/>
            <person name="Pichova I."/>
        </authorList>
    </citation>
    <scope>FUNCTION</scope>
    <scope>CATALYTIC ACTIVITY</scope>
    <scope>COFACTOR</scope>
    <scope>ACTIVITY REGULATION</scope>
    <scope>BIOPHYSICOCHEMICAL PROPERTIES</scope>
    <scope>PATHWAY</scope>
</reference>
<feature type="chain" id="PRO_0000111968" description="ATP-dependent 6-phosphofructokinase">
    <location>
        <begin position="1"/>
        <end position="343"/>
    </location>
</feature>
<feature type="active site" description="Proton acceptor" evidence="1">
    <location>
        <position position="128"/>
    </location>
</feature>
<feature type="binding site" evidence="1">
    <location>
        <position position="10"/>
    </location>
    <ligand>
        <name>ATP</name>
        <dbReference type="ChEBI" id="CHEBI:30616"/>
    </ligand>
</feature>
<feature type="binding site" evidence="1">
    <location>
        <begin position="73"/>
        <end position="74"/>
    </location>
    <ligand>
        <name>ATP</name>
        <dbReference type="ChEBI" id="CHEBI:30616"/>
    </ligand>
</feature>
<feature type="binding site" evidence="1">
    <location>
        <begin position="103"/>
        <end position="106"/>
    </location>
    <ligand>
        <name>ATP</name>
        <dbReference type="ChEBI" id="CHEBI:30616"/>
    </ligand>
</feature>
<feature type="binding site" evidence="1">
    <location>
        <position position="104"/>
    </location>
    <ligand>
        <name>Mg(2+)</name>
        <dbReference type="ChEBI" id="CHEBI:18420"/>
        <note>catalytic</note>
    </ligand>
</feature>
<feature type="binding site" description="in other chain" evidence="1">
    <location>
        <begin position="126"/>
        <end position="128"/>
    </location>
    <ligand>
        <name>substrate</name>
        <note>ligand shared between dimeric partners</note>
    </ligand>
</feature>
<feature type="binding site" evidence="1">
    <location>
        <position position="163"/>
    </location>
    <ligand>
        <name>substrate</name>
        <note>ligand shared between dimeric partners</note>
    </ligand>
</feature>
<feature type="binding site" description="in other chain" evidence="1">
    <location>
        <begin position="170"/>
        <end position="172"/>
    </location>
    <ligand>
        <name>substrate</name>
        <note>ligand shared between dimeric partners</note>
    </ligand>
</feature>
<feature type="binding site" description="in other chain" evidence="1">
    <location>
        <position position="223"/>
    </location>
    <ligand>
        <name>substrate</name>
        <note>ligand shared between dimeric partners</note>
    </ligand>
</feature>
<feature type="binding site" evidence="1">
    <location>
        <position position="267"/>
    </location>
    <ligand>
        <name>substrate</name>
        <note>ligand shared between dimeric partners</note>
    </ligand>
</feature>
<feature type="binding site" description="in other chain" evidence="1">
    <location>
        <begin position="273"/>
        <end position="276"/>
    </location>
    <ligand>
        <name>substrate</name>
        <note>ligand shared between dimeric partners</note>
    </ligand>
</feature>
<feature type="site" description="Important for substrate specificity; cannot use PPi as phosphoryl donor" evidence="1">
    <location>
        <position position="105"/>
    </location>
</feature>
<dbReference type="EC" id="2.7.1.11" evidence="1 2"/>
<dbReference type="EC" id="2.7.1.144" evidence="2"/>
<dbReference type="EMBL" id="AL123456">
    <property type="protein sequence ID" value="CCP45816.1"/>
    <property type="molecule type" value="Genomic_DNA"/>
</dbReference>
<dbReference type="PIR" id="E70856">
    <property type="entry name" value="E70856"/>
</dbReference>
<dbReference type="RefSeq" id="NP_217526.1">
    <property type="nucleotide sequence ID" value="NC_000962.3"/>
</dbReference>
<dbReference type="RefSeq" id="WP_003415251.1">
    <property type="nucleotide sequence ID" value="NZ_NVQJ01000041.1"/>
</dbReference>
<dbReference type="SMR" id="P9WID7"/>
<dbReference type="FunCoup" id="P9WID7">
    <property type="interactions" value="258"/>
</dbReference>
<dbReference type="STRING" id="83332.Rv3010c"/>
<dbReference type="PaxDb" id="83332-Rv3010c"/>
<dbReference type="DNASU" id="888509"/>
<dbReference type="GeneID" id="888509"/>
<dbReference type="KEGG" id="mtu:Rv3010c"/>
<dbReference type="KEGG" id="mtv:RVBD_3010c"/>
<dbReference type="TubercuList" id="Rv3010c"/>
<dbReference type="eggNOG" id="COG0205">
    <property type="taxonomic scope" value="Bacteria"/>
</dbReference>
<dbReference type="InParanoid" id="P9WID7"/>
<dbReference type="OrthoDB" id="9802503at2"/>
<dbReference type="PhylomeDB" id="P9WID7"/>
<dbReference type="UniPathway" id="UPA00109">
    <property type="reaction ID" value="UER00182"/>
</dbReference>
<dbReference type="Proteomes" id="UP000001584">
    <property type="component" value="Chromosome"/>
</dbReference>
<dbReference type="GO" id="GO:0005945">
    <property type="term" value="C:6-phosphofructokinase complex"/>
    <property type="evidence" value="ECO:0000318"/>
    <property type="project" value="GO_Central"/>
</dbReference>
<dbReference type="GO" id="GO:0009274">
    <property type="term" value="C:peptidoglycan-based cell wall"/>
    <property type="evidence" value="ECO:0007005"/>
    <property type="project" value="MTBBASE"/>
</dbReference>
<dbReference type="GO" id="GO:0005886">
    <property type="term" value="C:plasma membrane"/>
    <property type="evidence" value="ECO:0007005"/>
    <property type="project" value="MTBBASE"/>
</dbReference>
<dbReference type="GO" id="GO:0003872">
    <property type="term" value="F:6-phosphofructokinase activity"/>
    <property type="evidence" value="ECO:0000318"/>
    <property type="project" value="GO_Central"/>
</dbReference>
<dbReference type="GO" id="GO:0005524">
    <property type="term" value="F:ATP binding"/>
    <property type="evidence" value="ECO:0007669"/>
    <property type="project" value="UniProtKB-KW"/>
</dbReference>
<dbReference type="GO" id="GO:0047334">
    <property type="term" value="F:diphosphate-fructose-6-phosphate 1-phosphotransferase activity"/>
    <property type="evidence" value="ECO:0007669"/>
    <property type="project" value="InterPro"/>
</dbReference>
<dbReference type="GO" id="GO:0070095">
    <property type="term" value="F:fructose-6-phosphate binding"/>
    <property type="evidence" value="ECO:0000318"/>
    <property type="project" value="GO_Central"/>
</dbReference>
<dbReference type="GO" id="GO:0046872">
    <property type="term" value="F:metal ion binding"/>
    <property type="evidence" value="ECO:0007669"/>
    <property type="project" value="UniProtKB-KW"/>
</dbReference>
<dbReference type="GO" id="GO:0009024">
    <property type="term" value="F:tagatose-6-phosphate kinase activity"/>
    <property type="evidence" value="ECO:0007669"/>
    <property type="project" value="RHEA"/>
</dbReference>
<dbReference type="GO" id="GO:0061621">
    <property type="term" value="P:canonical glycolysis"/>
    <property type="evidence" value="ECO:0000318"/>
    <property type="project" value="GO_Central"/>
</dbReference>
<dbReference type="GO" id="GO:0030388">
    <property type="term" value="P:fructose 1,6-bisphosphate metabolic process"/>
    <property type="evidence" value="ECO:0000318"/>
    <property type="project" value="GO_Central"/>
</dbReference>
<dbReference type="GO" id="GO:0006002">
    <property type="term" value="P:fructose 6-phosphate metabolic process"/>
    <property type="evidence" value="ECO:0000318"/>
    <property type="project" value="GO_Central"/>
</dbReference>
<dbReference type="FunFam" id="3.40.50.460:FF:000005">
    <property type="entry name" value="ATP-dependent 6-phosphofructokinase"/>
    <property type="match status" value="1"/>
</dbReference>
<dbReference type="Gene3D" id="3.40.50.450">
    <property type="match status" value="1"/>
</dbReference>
<dbReference type="Gene3D" id="3.40.50.460">
    <property type="entry name" value="Phosphofructokinase domain"/>
    <property type="match status" value="1"/>
</dbReference>
<dbReference type="HAMAP" id="MF_01976">
    <property type="entry name" value="Phosphofructokinase_III"/>
    <property type="match status" value="1"/>
</dbReference>
<dbReference type="InterPro" id="IPR022953">
    <property type="entry name" value="ATP_PFK"/>
</dbReference>
<dbReference type="InterPro" id="IPR012003">
    <property type="entry name" value="ATP_PFK_prok-type"/>
</dbReference>
<dbReference type="InterPro" id="IPR015912">
    <property type="entry name" value="Phosphofructokinase_CS"/>
</dbReference>
<dbReference type="InterPro" id="IPR000023">
    <property type="entry name" value="Phosphofructokinase_dom"/>
</dbReference>
<dbReference type="InterPro" id="IPR012829">
    <property type="entry name" value="Phosphofructokinase_III"/>
</dbReference>
<dbReference type="InterPro" id="IPR035966">
    <property type="entry name" value="PKF_sf"/>
</dbReference>
<dbReference type="NCBIfam" id="TIGR02483">
    <property type="entry name" value="PFK_mixed"/>
    <property type="match status" value="1"/>
</dbReference>
<dbReference type="NCBIfam" id="NF002872">
    <property type="entry name" value="PRK03202.1"/>
    <property type="match status" value="1"/>
</dbReference>
<dbReference type="PANTHER" id="PTHR13697:SF52">
    <property type="entry name" value="ATP-DEPENDENT 6-PHOSPHOFRUCTOKINASE 3"/>
    <property type="match status" value="1"/>
</dbReference>
<dbReference type="PANTHER" id="PTHR13697">
    <property type="entry name" value="PHOSPHOFRUCTOKINASE"/>
    <property type="match status" value="1"/>
</dbReference>
<dbReference type="Pfam" id="PF00365">
    <property type="entry name" value="PFK"/>
    <property type="match status" value="1"/>
</dbReference>
<dbReference type="PIRSF" id="PIRSF000532">
    <property type="entry name" value="ATP_PFK_prok"/>
    <property type="match status" value="1"/>
</dbReference>
<dbReference type="PRINTS" id="PR00476">
    <property type="entry name" value="PHFRCTKINASE"/>
</dbReference>
<dbReference type="SUPFAM" id="SSF53784">
    <property type="entry name" value="Phosphofructokinase"/>
    <property type="match status" value="1"/>
</dbReference>
<dbReference type="PROSITE" id="PS00433">
    <property type="entry name" value="PHOSPHOFRUCTOKINASE"/>
    <property type="match status" value="1"/>
</dbReference>
<sequence length="343" mass="36880">MRIGVLTGGGDCPGLNAVIRAVVRTCHARYGSSVVGFQNGFRGLLENRRVQLHNDDRNDRLLAKGGTMLGTARVHPDKLRAGLPQIMQTLDDNGIDVLIPIGGEGTLTAASWLSEENVPVVGVPKTIDNDIDCTDVTFGHDTALTVATEAIDRLHSTAESHERVMLVEVMGRHAGWIALNAGLASGAHMTLIPEQPFDIEEVCRLVKGRFQRGDSHFICVVAEGAKPAPGTIMLREGGLDEFGHERFTGVAAQLAVEVEKRINKDVRVTVLGHIQRGGTPTAYDRVLATRFGVNAADAAHAGEYGQMVTLRGQDIGRVPLADAVRKLKLVPQSRYDDAAAFFG</sequence>
<keyword id="KW-0021">Allosteric enzyme</keyword>
<keyword id="KW-0067">ATP-binding</keyword>
<keyword id="KW-0963">Cytoplasm</keyword>
<keyword id="KW-0324">Glycolysis</keyword>
<keyword id="KW-0418">Kinase</keyword>
<keyword id="KW-0460">Magnesium</keyword>
<keyword id="KW-0479">Metal-binding</keyword>
<keyword id="KW-0547">Nucleotide-binding</keyword>
<keyword id="KW-1185">Reference proteome</keyword>
<keyword id="KW-0808">Transferase</keyword>